<keyword id="KW-0143">Chaperone</keyword>
<keyword id="KW-0963">Cytoplasm</keyword>
<keyword id="KW-0539">Nucleus</keyword>
<keyword id="KW-1185">Reference proteome</keyword>
<feature type="chain" id="PRO_0000065719" description="Probable proteasome maturation factor ump1">
    <location>
        <begin position="1"/>
        <end position="129"/>
    </location>
</feature>
<accession>O74416</accession>
<protein>
    <recommendedName>
        <fullName>Probable proteasome maturation factor ump1</fullName>
    </recommendedName>
</protein>
<gene>
    <name type="primary">ump1</name>
    <name type="ORF">SPCC14G10.03c</name>
</gene>
<sequence length="129" mass="14661">MKIVPDVEPAAEVSGNFKVSVLEPSIPAVHRVENKHPLESRLKNWEAQQQQIRLDSMRRIYGLHEPVRREMEQKLASQSSRPLALGGSANFHLDILANREAVLDETDIYAAPIPLEMTYQNEMAIRYGL</sequence>
<reference key="1">
    <citation type="journal article" date="2002" name="Nature">
        <title>The genome sequence of Schizosaccharomyces pombe.</title>
        <authorList>
            <person name="Wood V."/>
            <person name="Gwilliam R."/>
            <person name="Rajandream M.A."/>
            <person name="Lyne M.H."/>
            <person name="Lyne R."/>
            <person name="Stewart A."/>
            <person name="Sgouros J.G."/>
            <person name="Peat N."/>
            <person name="Hayles J."/>
            <person name="Baker S.G."/>
            <person name="Basham D."/>
            <person name="Bowman S."/>
            <person name="Brooks K."/>
            <person name="Brown D."/>
            <person name="Brown S."/>
            <person name="Chillingworth T."/>
            <person name="Churcher C.M."/>
            <person name="Collins M."/>
            <person name="Connor R."/>
            <person name="Cronin A."/>
            <person name="Davis P."/>
            <person name="Feltwell T."/>
            <person name="Fraser A."/>
            <person name="Gentles S."/>
            <person name="Goble A."/>
            <person name="Hamlin N."/>
            <person name="Harris D.E."/>
            <person name="Hidalgo J."/>
            <person name="Hodgson G."/>
            <person name="Holroyd S."/>
            <person name="Hornsby T."/>
            <person name="Howarth S."/>
            <person name="Huckle E.J."/>
            <person name="Hunt S."/>
            <person name="Jagels K."/>
            <person name="James K.D."/>
            <person name="Jones L."/>
            <person name="Jones M."/>
            <person name="Leather S."/>
            <person name="McDonald S."/>
            <person name="McLean J."/>
            <person name="Mooney P."/>
            <person name="Moule S."/>
            <person name="Mungall K.L."/>
            <person name="Murphy L.D."/>
            <person name="Niblett D."/>
            <person name="Odell C."/>
            <person name="Oliver K."/>
            <person name="O'Neil S."/>
            <person name="Pearson D."/>
            <person name="Quail M.A."/>
            <person name="Rabbinowitsch E."/>
            <person name="Rutherford K.M."/>
            <person name="Rutter S."/>
            <person name="Saunders D."/>
            <person name="Seeger K."/>
            <person name="Sharp S."/>
            <person name="Skelton J."/>
            <person name="Simmonds M.N."/>
            <person name="Squares R."/>
            <person name="Squares S."/>
            <person name="Stevens K."/>
            <person name="Taylor K."/>
            <person name="Taylor R.G."/>
            <person name="Tivey A."/>
            <person name="Walsh S.V."/>
            <person name="Warren T."/>
            <person name="Whitehead S."/>
            <person name="Woodward J.R."/>
            <person name="Volckaert G."/>
            <person name="Aert R."/>
            <person name="Robben J."/>
            <person name="Grymonprez B."/>
            <person name="Weltjens I."/>
            <person name="Vanstreels E."/>
            <person name="Rieger M."/>
            <person name="Schaefer M."/>
            <person name="Mueller-Auer S."/>
            <person name="Gabel C."/>
            <person name="Fuchs M."/>
            <person name="Duesterhoeft A."/>
            <person name="Fritzc C."/>
            <person name="Holzer E."/>
            <person name="Moestl D."/>
            <person name="Hilbert H."/>
            <person name="Borzym K."/>
            <person name="Langer I."/>
            <person name="Beck A."/>
            <person name="Lehrach H."/>
            <person name="Reinhardt R."/>
            <person name="Pohl T.M."/>
            <person name="Eger P."/>
            <person name="Zimmermann W."/>
            <person name="Wedler H."/>
            <person name="Wambutt R."/>
            <person name="Purnelle B."/>
            <person name="Goffeau A."/>
            <person name="Cadieu E."/>
            <person name="Dreano S."/>
            <person name="Gloux S."/>
            <person name="Lelaure V."/>
            <person name="Mottier S."/>
            <person name="Galibert F."/>
            <person name="Aves S.J."/>
            <person name="Xiang Z."/>
            <person name="Hunt C."/>
            <person name="Moore K."/>
            <person name="Hurst S.M."/>
            <person name="Lucas M."/>
            <person name="Rochet M."/>
            <person name="Gaillardin C."/>
            <person name="Tallada V.A."/>
            <person name="Garzon A."/>
            <person name="Thode G."/>
            <person name="Daga R.R."/>
            <person name="Cruzado L."/>
            <person name="Jimenez J."/>
            <person name="Sanchez M."/>
            <person name="del Rey F."/>
            <person name="Benito J."/>
            <person name="Dominguez A."/>
            <person name="Revuelta J.L."/>
            <person name="Moreno S."/>
            <person name="Armstrong J."/>
            <person name="Forsburg S.L."/>
            <person name="Cerutti L."/>
            <person name="Lowe T."/>
            <person name="McCombie W.R."/>
            <person name="Paulsen I."/>
            <person name="Potashkin J."/>
            <person name="Shpakovski G.V."/>
            <person name="Ussery D."/>
            <person name="Barrell B.G."/>
            <person name="Nurse P."/>
        </authorList>
    </citation>
    <scope>NUCLEOTIDE SEQUENCE [LARGE SCALE GENOMIC DNA]</scope>
    <source>
        <strain>972 / ATCC 24843</strain>
    </source>
</reference>
<reference key="2">
    <citation type="journal article" date="2006" name="Nat. Biotechnol.">
        <title>ORFeome cloning and global analysis of protein localization in the fission yeast Schizosaccharomyces pombe.</title>
        <authorList>
            <person name="Matsuyama A."/>
            <person name="Arai R."/>
            <person name="Yashiroda Y."/>
            <person name="Shirai A."/>
            <person name="Kamata A."/>
            <person name="Sekido S."/>
            <person name="Kobayashi Y."/>
            <person name="Hashimoto A."/>
            <person name="Hamamoto M."/>
            <person name="Hiraoka Y."/>
            <person name="Horinouchi S."/>
            <person name="Yoshida M."/>
        </authorList>
    </citation>
    <scope>SUBCELLULAR LOCATION [LARGE SCALE ANALYSIS]</scope>
</reference>
<proteinExistence type="inferred from homology"/>
<organism>
    <name type="scientific">Schizosaccharomyces pombe (strain 972 / ATCC 24843)</name>
    <name type="common">Fission yeast</name>
    <dbReference type="NCBI Taxonomy" id="284812"/>
    <lineage>
        <taxon>Eukaryota</taxon>
        <taxon>Fungi</taxon>
        <taxon>Dikarya</taxon>
        <taxon>Ascomycota</taxon>
        <taxon>Taphrinomycotina</taxon>
        <taxon>Schizosaccharomycetes</taxon>
        <taxon>Schizosaccharomycetales</taxon>
        <taxon>Schizosaccharomycetaceae</taxon>
        <taxon>Schizosaccharomyces</taxon>
    </lineage>
</organism>
<dbReference type="EMBL" id="CU329672">
    <property type="protein sequence ID" value="CAA20656.1"/>
    <property type="molecule type" value="Genomic_DNA"/>
</dbReference>
<dbReference type="PIR" id="T41014">
    <property type="entry name" value="T41014"/>
</dbReference>
<dbReference type="RefSeq" id="NP_587944.1">
    <property type="nucleotide sequence ID" value="NM_001022935.2"/>
</dbReference>
<dbReference type="SMR" id="O74416"/>
<dbReference type="BioGRID" id="275694">
    <property type="interactions" value="4"/>
</dbReference>
<dbReference type="FunCoup" id="O74416">
    <property type="interactions" value="426"/>
</dbReference>
<dbReference type="STRING" id="284812.O74416"/>
<dbReference type="iPTMnet" id="O74416"/>
<dbReference type="PaxDb" id="4896-SPCC14G10.03c.1"/>
<dbReference type="EnsemblFungi" id="SPCC14G10.03c.1">
    <property type="protein sequence ID" value="SPCC14G10.03c.1:pep"/>
    <property type="gene ID" value="SPCC14G10.03c"/>
</dbReference>
<dbReference type="GeneID" id="2539122"/>
<dbReference type="KEGG" id="spo:2539122"/>
<dbReference type="PomBase" id="SPCC14G10.03c">
    <property type="gene designation" value="ump1"/>
</dbReference>
<dbReference type="VEuPathDB" id="FungiDB:SPCC14G10.03c"/>
<dbReference type="eggNOG" id="KOG3061">
    <property type="taxonomic scope" value="Eukaryota"/>
</dbReference>
<dbReference type="HOGENOM" id="CLU_2005237_0_0_1"/>
<dbReference type="InParanoid" id="O74416"/>
<dbReference type="OMA" id="IYGLHEP"/>
<dbReference type="PhylomeDB" id="O74416"/>
<dbReference type="Reactome" id="R-SPO-9907900">
    <property type="pathway name" value="Proteasome assembly"/>
</dbReference>
<dbReference type="PRO" id="PR:O74416"/>
<dbReference type="Proteomes" id="UP000002485">
    <property type="component" value="Chromosome III"/>
</dbReference>
<dbReference type="GO" id="GO:0005737">
    <property type="term" value="C:cytoplasm"/>
    <property type="evidence" value="ECO:0000318"/>
    <property type="project" value="GO_Central"/>
</dbReference>
<dbReference type="GO" id="GO:0005829">
    <property type="term" value="C:cytosol"/>
    <property type="evidence" value="ECO:0007005"/>
    <property type="project" value="PomBase"/>
</dbReference>
<dbReference type="GO" id="GO:0005634">
    <property type="term" value="C:nucleus"/>
    <property type="evidence" value="ECO:0007005"/>
    <property type="project" value="PomBase"/>
</dbReference>
<dbReference type="GO" id="GO:0043248">
    <property type="term" value="P:proteasome assembly"/>
    <property type="evidence" value="ECO:0000318"/>
    <property type="project" value="GO_Central"/>
</dbReference>
<dbReference type="InterPro" id="IPR008012">
    <property type="entry name" value="Ump1"/>
</dbReference>
<dbReference type="PANTHER" id="PTHR12828:SF3">
    <property type="entry name" value="PROTEASOME MATURATION PROTEIN"/>
    <property type="match status" value="1"/>
</dbReference>
<dbReference type="PANTHER" id="PTHR12828">
    <property type="entry name" value="PROTEASOME MATURATION PROTEIN UMP1"/>
    <property type="match status" value="1"/>
</dbReference>
<dbReference type="Pfam" id="PF05348">
    <property type="entry name" value="UMP1"/>
    <property type="match status" value="1"/>
</dbReference>
<name>UMP1_SCHPO</name>
<comment type="function">
    <text evidence="1">Short-lived chaperone present in the precursor form of the 20S proteasome and absent in the mature complex. Required for the correct assembly and enzymatic activation of the proteasome (By similarity).</text>
</comment>
<comment type="subcellular location">
    <subcellularLocation>
        <location evidence="2">Cytoplasm</location>
    </subcellularLocation>
    <subcellularLocation>
        <location evidence="2">Nucleus</location>
    </subcellularLocation>
</comment>
<comment type="similarity">
    <text evidence="3">Belongs to the POMP/UMP1 family.</text>
</comment>
<evidence type="ECO:0000250" key="1"/>
<evidence type="ECO:0000269" key="2">
    <source>
    </source>
</evidence>
<evidence type="ECO:0000305" key="3"/>